<feature type="chain" id="PRO_0000092598" description="ATP-dependent lipid A-core flippase">
    <location>
        <begin position="1"/>
        <end position="582"/>
    </location>
</feature>
<feature type="transmembrane region" description="Helical" evidence="1">
    <location>
        <begin position="16"/>
        <end position="36"/>
    </location>
</feature>
<feature type="transmembrane region" description="Helical" evidence="1">
    <location>
        <begin position="64"/>
        <end position="84"/>
    </location>
</feature>
<feature type="transmembrane region" description="Helical" evidence="1">
    <location>
        <begin position="153"/>
        <end position="173"/>
    </location>
</feature>
<feature type="transmembrane region" description="Helical" evidence="1">
    <location>
        <begin position="253"/>
        <end position="273"/>
    </location>
</feature>
<feature type="transmembrane region" description="Helical" evidence="1">
    <location>
        <begin position="275"/>
        <end position="295"/>
    </location>
</feature>
<feature type="domain" description="ABC transmembrane type-1" evidence="1">
    <location>
        <begin position="28"/>
        <end position="310"/>
    </location>
</feature>
<feature type="domain" description="ABC transporter" evidence="1">
    <location>
        <begin position="342"/>
        <end position="578"/>
    </location>
</feature>
<feature type="binding site" evidence="1">
    <location>
        <begin position="376"/>
        <end position="383"/>
    </location>
    <ligand>
        <name>ATP</name>
        <dbReference type="ChEBI" id="CHEBI:30616"/>
    </ligand>
</feature>
<feature type="helix" evidence="2">
    <location>
        <begin position="9"/>
        <end position="20"/>
    </location>
</feature>
<feature type="helix" evidence="2">
    <location>
        <begin position="21"/>
        <end position="24"/>
    </location>
</feature>
<feature type="helix" evidence="2">
    <location>
        <begin position="25"/>
        <end position="46"/>
    </location>
</feature>
<feature type="helix" evidence="2">
    <location>
        <begin position="48"/>
        <end position="52"/>
    </location>
</feature>
<feature type="turn" evidence="2">
    <location>
        <begin position="53"/>
        <end position="59"/>
    </location>
</feature>
<feature type="helix" evidence="2">
    <location>
        <begin position="63"/>
        <end position="108"/>
    </location>
</feature>
<feature type="helix" evidence="2">
    <location>
        <begin position="113"/>
        <end position="116"/>
    </location>
</feature>
<feature type="helix" evidence="2">
    <location>
        <begin position="121"/>
        <end position="209"/>
    </location>
</feature>
<feature type="helix" evidence="2">
    <location>
        <begin position="214"/>
        <end position="220"/>
    </location>
</feature>
<feature type="helix" evidence="2">
    <location>
        <begin position="223"/>
        <end position="271"/>
    </location>
</feature>
<feature type="helix" evidence="2">
    <location>
        <begin position="273"/>
        <end position="276"/>
    </location>
</feature>
<feature type="helix" evidence="2">
    <location>
        <begin position="281"/>
        <end position="293"/>
    </location>
</feature>
<feature type="helix" evidence="2">
    <location>
        <begin position="295"/>
        <end position="301"/>
    </location>
</feature>
<feature type="helix" evidence="2">
    <location>
        <begin position="304"/>
        <end position="323"/>
    </location>
</feature>
<feature type="strand" evidence="2">
    <location>
        <begin position="342"/>
        <end position="349"/>
    </location>
</feature>
<feature type="strand" evidence="2">
    <location>
        <begin position="358"/>
        <end position="366"/>
    </location>
</feature>
<feature type="strand" evidence="2">
    <location>
        <begin position="371"/>
        <end position="376"/>
    </location>
</feature>
<feature type="strand" evidence="2">
    <location>
        <begin position="378"/>
        <end position="381"/>
    </location>
</feature>
<feature type="helix" evidence="2">
    <location>
        <begin position="382"/>
        <end position="389"/>
    </location>
</feature>
<feature type="strand" evidence="2">
    <location>
        <begin position="396"/>
        <end position="402"/>
    </location>
</feature>
<feature type="helix" evidence="2">
    <location>
        <begin position="407"/>
        <end position="409"/>
    </location>
</feature>
<feature type="helix" evidence="2">
    <location>
        <begin position="412"/>
        <end position="418"/>
    </location>
</feature>
<feature type="strand" evidence="2">
    <location>
        <begin position="430"/>
        <end position="432"/>
    </location>
</feature>
<feature type="helix" evidence="2">
    <location>
        <begin position="433"/>
        <end position="437"/>
    </location>
</feature>
<feature type="strand" evidence="2">
    <location>
        <begin position="438"/>
        <end position="440"/>
    </location>
</feature>
<feature type="strand" evidence="2">
    <location>
        <begin position="442"/>
        <end position="445"/>
    </location>
</feature>
<feature type="helix" evidence="2">
    <location>
        <begin position="447"/>
        <end position="456"/>
    </location>
</feature>
<feature type="helix" evidence="2">
    <location>
        <begin position="460"/>
        <end position="463"/>
    </location>
</feature>
<feature type="strand" evidence="2">
    <location>
        <begin position="464"/>
        <end position="466"/>
    </location>
</feature>
<feature type="helix" evidence="2">
    <location>
        <begin position="469"/>
        <end position="471"/>
    </location>
</feature>
<feature type="helix" evidence="2">
    <location>
        <begin position="483"/>
        <end position="496"/>
    </location>
</feature>
<feature type="strand" evidence="2">
    <location>
        <begin position="500"/>
        <end position="505"/>
    </location>
</feature>
<feature type="strand" evidence="2">
    <location>
        <begin position="507"/>
        <end position="509"/>
    </location>
</feature>
<feature type="helix" evidence="2">
    <location>
        <begin position="516"/>
        <end position="527"/>
    </location>
</feature>
<feature type="strand" evidence="2">
    <location>
        <begin position="530"/>
        <end position="535"/>
    </location>
</feature>
<feature type="helix" evidence="2">
    <location>
        <begin position="539"/>
        <end position="543"/>
    </location>
</feature>
<feature type="strand" evidence="2">
    <location>
        <begin position="546"/>
        <end position="552"/>
    </location>
</feature>
<feature type="strand" evidence="2">
    <location>
        <begin position="555"/>
        <end position="560"/>
    </location>
</feature>
<feature type="helix" evidence="2">
    <location>
        <begin position="562"/>
        <end position="566"/>
    </location>
</feature>
<feature type="turn" evidence="2">
    <location>
        <begin position="567"/>
        <end position="569"/>
    </location>
</feature>
<feature type="helix" evidence="2">
    <location>
        <begin position="571"/>
        <end position="578"/>
    </location>
</feature>
<organism>
    <name type="scientific">Salmonella typhimurium (strain LT2 / SGSC1412 / ATCC 700720)</name>
    <dbReference type="NCBI Taxonomy" id="99287"/>
    <lineage>
        <taxon>Bacteria</taxon>
        <taxon>Pseudomonadati</taxon>
        <taxon>Pseudomonadota</taxon>
        <taxon>Gammaproteobacteria</taxon>
        <taxon>Enterobacterales</taxon>
        <taxon>Enterobacteriaceae</taxon>
        <taxon>Salmonella</taxon>
    </lineage>
</organism>
<sequence length="582" mass="64340">MHNDKDLSTWQTFRRLWPTIAPFKAGLIVAGIALILNAASDTFMLSLLKPLLDDGFGKTDRSVLLWMPLVVIGLMILRGITSYISSYCISWVSGKVVMTMRRRLFGHMMGMPVAFFDKQSTGTLLSRITYDSEQVASSSSGALITVVREGASIIGLFIMMFYYSWQLSIILVVLAPIVSIAIRVVSKRFRSISKNMQNTMGQVTTSAEQMLKGHKEVLIFGGQEVETKRFDKVSNKMRLQGMKMVSASSISDPIIQLIASLALAFVLYAASFPSVMDSLTAGTITVVFSSMIALMRPLKSLTNVNAQFQRGMAACQTLFAILDSEQEKDEGKRVIDRATGDLEFRNVTFTYPGREVPALRNINLKIPAGKTVALVGRSGSGKSTIASLITRFYDIDEGHILMDGHDLREYTLASLRNQVALVSQNVHLFNDTVANNIAYARTEEYSREQIEEAARMAYAMDFINKMDNGLDTIIGENGVLLSGGQRQRIAIARALLRDSPILILDEATSALDTESERAIQAALDELQKNRTSLVIAHRLSTIEQADEIVVVEDGIIVERGTHSELLAQHGVYAQLHKMQFGQ</sequence>
<comment type="function">
    <text evidence="1">Involved in lipopolysaccharide (LPS) biosynthesis. Translocates lipid A-core from the inner to the outer leaflet of the inner membrane. Transmembrane domains (TMD) form a pore in the inner membrane and the ATP-binding domain (NBD) is responsible for energy generation.</text>
</comment>
<comment type="catalytic activity">
    <reaction evidence="1">
        <text>ATP + H2O + lipid A-core oligosaccharideSide 1 = ADP + phosphate + lipid A-core oligosaccharideSide 2.</text>
        <dbReference type="EC" id="7.5.2.6"/>
    </reaction>
</comment>
<comment type="subunit">
    <text evidence="1">Homodimer.</text>
</comment>
<comment type="interaction">
    <interactant intactId="EBI-15671217">
        <id>P63359</id>
    </interactant>
    <interactant intactId="EBI-15671217">
        <id>P63359</id>
        <label>msbA</label>
    </interactant>
    <organismsDiffer>false</organismsDiffer>
    <experiments>2</experiments>
</comment>
<comment type="subcellular location">
    <subcellularLocation>
        <location evidence="1">Cell inner membrane</location>
        <topology evidence="1">Multi-pass membrane protein</topology>
    </subcellularLocation>
</comment>
<comment type="domain">
    <text evidence="1">In MsbA the ATP-binding domain (NBD) and the transmembrane domain (TMD) are fused.</text>
</comment>
<comment type="similarity">
    <text evidence="1">Belongs to the ABC transporter superfamily. Lipid exporter (TC 3.A.1.106) family.</text>
</comment>
<reference key="1">
    <citation type="journal article" date="2001" name="Nature">
        <title>Complete genome sequence of Salmonella enterica serovar Typhimurium LT2.</title>
        <authorList>
            <person name="McClelland M."/>
            <person name="Sanderson K.E."/>
            <person name="Spieth J."/>
            <person name="Clifton S.W."/>
            <person name="Latreille P."/>
            <person name="Courtney L."/>
            <person name="Porwollik S."/>
            <person name="Ali J."/>
            <person name="Dante M."/>
            <person name="Du F."/>
            <person name="Hou S."/>
            <person name="Layman D."/>
            <person name="Leonard S."/>
            <person name="Nguyen C."/>
            <person name="Scott K."/>
            <person name="Holmes A."/>
            <person name="Grewal N."/>
            <person name="Mulvaney E."/>
            <person name="Ryan E."/>
            <person name="Sun H."/>
            <person name="Florea L."/>
            <person name="Miller W."/>
            <person name="Stoneking T."/>
            <person name="Nhan M."/>
            <person name="Waterston R."/>
            <person name="Wilson R.K."/>
        </authorList>
    </citation>
    <scope>NUCLEOTIDE SEQUENCE [LARGE SCALE GENOMIC DNA]</scope>
    <source>
        <strain>LT2 / SGSC1412 / ATCC 700720</strain>
    </source>
</reference>
<proteinExistence type="evidence at protein level"/>
<name>MSBA_SALTY</name>
<gene>
    <name evidence="1" type="primary">msbA</name>
    <name type="ordered locus">STM0984</name>
</gene>
<evidence type="ECO:0000255" key="1">
    <source>
        <dbReference type="HAMAP-Rule" id="MF_01703"/>
    </source>
</evidence>
<evidence type="ECO:0007829" key="2">
    <source>
        <dbReference type="PDB" id="6BL6"/>
    </source>
</evidence>
<accession>P63359</accession>
<accession>Q8XFG5</accession>
<dbReference type="EC" id="7.5.2.6" evidence="1"/>
<dbReference type="EMBL" id="AE006468">
    <property type="protein sequence ID" value="AAL19918.1"/>
    <property type="molecule type" value="Genomic_DNA"/>
</dbReference>
<dbReference type="RefSeq" id="NP_459959.1">
    <property type="nucleotide sequence ID" value="NC_003197.2"/>
</dbReference>
<dbReference type="RefSeq" id="WP_000551246.1">
    <property type="nucleotide sequence ID" value="NC_003197.2"/>
</dbReference>
<dbReference type="PDB" id="3B5Y">
    <property type="method" value="X-ray"/>
    <property type="resolution" value="4.50 A"/>
    <property type="chains" value="A/B/C/D=1-582"/>
</dbReference>
<dbReference type="PDB" id="3B5Z">
    <property type="method" value="X-ray"/>
    <property type="resolution" value="4.20 A"/>
    <property type="chains" value="A/B/C/D=1-582"/>
</dbReference>
<dbReference type="PDB" id="3B60">
    <property type="method" value="X-ray"/>
    <property type="resolution" value="3.70 A"/>
    <property type="chains" value="A/B/C/D=1-582"/>
</dbReference>
<dbReference type="PDB" id="6BL6">
    <property type="method" value="X-ray"/>
    <property type="resolution" value="2.80 A"/>
    <property type="chains" value="A/B=7-582"/>
</dbReference>
<dbReference type="PDB" id="6O30">
    <property type="method" value="X-ray"/>
    <property type="resolution" value="4.47 A"/>
    <property type="chains" value="A/B=7-582"/>
</dbReference>
<dbReference type="PDBsum" id="3B5Y"/>
<dbReference type="PDBsum" id="3B5Z"/>
<dbReference type="PDBsum" id="3B60"/>
<dbReference type="PDBsum" id="6BL6"/>
<dbReference type="PDBsum" id="6O30"/>
<dbReference type="SMR" id="P63359"/>
<dbReference type="DIP" id="DIP-46177N"/>
<dbReference type="STRING" id="99287.STM0984"/>
<dbReference type="TCDB" id="3.A.1.106.20">
    <property type="family name" value="the atp-binding cassette (abc) superfamily"/>
</dbReference>
<dbReference type="PaxDb" id="99287-STM0984"/>
<dbReference type="GeneID" id="1252502"/>
<dbReference type="KEGG" id="stm:STM0984"/>
<dbReference type="PATRIC" id="fig|99287.12.peg.1037"/>
<dbReference type="HOGENOM" id="CLU_000604_84_3_6"/>
<dbReference type="OMA" id="MYTGHTL"/>
<dbReference type="PhylomeDB" id="P63359"/>
<dbReference type="BioCyc" id="SENT99287:STM0984-MONOMER"/>
<dbReference type="BRENDA" id="7.5.2.6">
    <property type="organism ID" value="5542"/>
</dbReference>
<dbReference type="EvolutionaryTrace" id="P63359"/>
<dbReference type="Proteomes" id="UP000001014">
    <property type="component" value="Chromosome"/>
</dbReference>
<dbReference type="GO" id="GO:0005886">
    <property type="term" value="C:plasma membrane"/>
    <property type="evidence" value="ECO:0007669"/>
    <property type="project" value="UniProtKB-SubCell"/>
</dbReference>
<dbReference type="GO" id="GO:0140359">
    <property type="term" value="F:ABC-type transporter activity"/>
    <property type="evidence" value="ECO:0007669"/>
    <property type="project" value="InterPro"/>
</dbReference>
<dbReference type="GO" id="GO:0005524">
    <property type="term" value="F:ATP binding"/>
    <property type="evidence" value="ECO:0007669"/>
    <property type="project" value="UniProtKB-KW"/>
</dbReference>
<dbReference type="GO" id="GO:0016887">
    <property type="term" value="F:ATP hydrolysis activity"/>
    <property type="evidence" value="ECO:0007669"/>
    <property type="project" value="InterPro"/>
</dbReference>
<dbReference type="GO" id="GO:0034040">
    <property type="term" value="F:ATPase-coupled lipid transmembrane transporter activity"/>
    <property type="evidence" value="ECO:0000318"/>
    <property type="project" value="GO_Central"/>
</dbReference>
<dbReference type="GO" id="GO:0042802">
    <property type="term" value="F:identical protein binding"/>
    <property type="evidence" value="ECO:0000353"/>
    <property type="project" value="IntAct"/>
</dbReference>
<dbReference type="GO" id="GO:0055085">
    <property type="term" value="P:transmembrane transport"/>
    <property type="evidence" value="ECO:0000318"/>
    <property type="project" value="GO_Central"/>
</dbReference>
<dbReference type="CDD" id="cd18552">
    <property type="entry name" value="ABC_6TM_MsbA_like"/>
    <property type="match status" value="1"/>
</dbReference>
<dbReference type="CDD" id="cd03251">
    <property type="entry name" value="ABCC_MsbA"/>
    <property type="match status" value="1"/>
</dbReference>
<dbReference type="FunFam" id="1.20.1560.10:FF:000008">
    <property type="entry name" value="Lipid A export ATP-binding/permease protein MsbA"/>
    <property type="match status" value="1"/>
</dbReference>
<dbReference type="FunFam" id="3.40.50.300:FF:000140">
    <property type="entry name" value="Lipid A export ATP-binding/permease protein MsbA"/>
    <property type="match status" value="1"/>
</dbReference>
<dbReference type="Gene3D" id="1.20.1560.10">
    <property type="entry name" value="ABC transporter type 1, transmembrane domain"/>
    <property type="match status" value="1"/>
</dbReference>
<dbReference type="Gene3D" id="3.40.50.300">
    <property type="entry name" value="P-loop containing nucleotide triphosphate hydrolases"/>
    <property type="match status" value="1"/>
</dbReference>
<dbReference type="InterPro" id="IPR003593">
    <property type="entry name" value="AAA+_ATPase"/>
</dbReference>
<dbReference type="InterPro" id="IPR011527">
    <property type="entry name" value="ABC1_TM_dom"/>
</dbReference>
<dbReference type="InterPro" id="IPR036640">
    <property type="entry name" value="ABC1_TM_sf"/>
</dbReference>
<dbReference type="InterPro" id="IPR003439">
    <property type="entry name" value="ABC_transporter-like_ATP-bd"/>
</dbReference>
<dbReference type="InterPro" id="IPR017871">
    <property type="entry name" value="ABC_transporter-like_CS"/>
</dbReference>
<dbReference type="InterPro" id="IPR011917">
    <property type="entry name" value="ABC_transpr_lipidA"/>
</dbReference>
<dbReference type="InterPro" id="IPR027417">
    <property type="entry name" value="P-loop_NTPase"/>
</dbReference>
<dbReference type="InterPro" id="IPR039421">
    <property type="entry name" value="Type_1_exporter"/>
</dbReference>
<dbReference type="NCBIfam" id="TIGR02203">
    <property type="entry name" value="MsbA_lipidA"/>
    <property type="match status" value="1"/>
</dbReference>
<dbReference type="NCBIfam" id="NF008381">
    <property type="entry name" value="PRK11176.1"/>
    <property type="match status" value="1"/>
</dbReference>
<dbReference type="PANTHER" id="PTHR43394:SF1">
    <property type="entry name" value="ATP-BINDING CASSETTE SUB-FAMILY B MEMBER 10, MITOCHONDRIAL"/>
    <property type="match status" value="1"/>
</dbReference>
<dbReference type="PANTHER" id="PTHR43394">
    <property type="entry name" value="ATP-DEPENDENT PERMEASE MDL1, MITOCHONDRIAL"/>
    <property type="match status" value="1"/>
</dbReference>
<dbReference type="Pfam" id="PF00664">
    <property type="entry name" value="ABC_membrane"/>
    <property type="match status" value="1"/>
</dbReference>
<dbReference type="Pfam" id="PF00005">
    <property type="entry name" value="ABC_tran"/>
    <property type="match status" value="1"/>
</dbReference>
<dbReference type="SMART" id="SM00382">
    <property type="entry name" value="AAA"/>
    <property type="match status" value="1"/>
</dbReference>
<dbReference type="SUPFAM" id="SSF90123">
    <property type="entry name" value="ABC transporter transmembrane region"/>
    <property type="match status" value="1"/>
</dbReference>
<dbReference type="SUPFAM" id="SSF52540">
    <property type="entry name" value="P-loop containing nucleoside triphosphate hydrolases"/>
    <property type="match status" value="1"/>
</dbReference>
<dbReference type="PROSITE" id="PS50929">
    <property type="entry name" value="ABC_TM1F"/>
    <property type="match status" value="1"/>
</dbReference>
<dbReference type="PROSITE" id="PS00211">
    <property type="entry name" value="ABC_TRANSPORTER_1"/>
    <property type="match status" value="1"/>
</dbReference>
<dbReference type="PROSITE" id="PS50893">
    <property type="entry name" value="ABC_TRANSPORTER_2"/>
    <property type="match status" value="1"/>
</dbReference>
<dbReference type="PROSITE" id="PS51239">
    <property type="entry name" value="MSBA"/>
    <property type="match status" value="1"/>
</dbReference>
<protein>
    <recommendedName>
        <fullName evidence="1">ATP-dependent lipid A-core flippase</fullName>
        <ecNumber evidence="1">7.5.2.6</ecNumber>
    </recommendedName>
    <alternativeName>
        <fullName evidence="1">Lipid A export ATP-binding/permease protein MsbA</fullName>
    </alternativeName>
</protein>
<keyword id="KW-0002">3D-structure</keyword>
<keyword id="KW-0067">ATP-binding</keyword>
<keyword id="KW-0997">Cell inner membrane</keyword>
<keyword id="KW-1003">Cell membrane</keyword>
<keyword id="KW-0445">Lipid transport</keyword>
<keyword id="KW-0472">Membrane</keyword>
<keyword id="KW-0547">Nucleotide-binding</keyword>
<keyword id="KW-1185">Reference proteome</keyword>
<keyword id="KW-1278">Translocase</keyword>
<keyword id="KW-0812">Transmembrane</keyword>
<keyword id="KW-1133">Transmembrane helix</keyword>
<keyword id="KW-0813">Transport</keyword>